<sequence length="61" mass="6942">MLNIFNLVCICIHSVLYSSSFFSAKLPEAYAFLNPIVDIMPVIPLLFFLLAFVWQAAVSFR</sequence>
<protein>
    <recommendedName>
        <fullName evidence="1">Photosystem II reaction center protein K</fullName>
        <shortName evidence="1">PSII-K</shortName>
    </recommendedName>
</protein>
<keyword id="KW-0150">Chloroplast</keyword>
<keyword id="KW-0472">Membrane</keyword>
<keyword id="KW-0602">Photosynthesis</keyword>
<keyword id="KW-0604">Photosystem II</keyword>
<keyword id="KW-0934">Plastid</keyword>
<keyword id="KW-0674">Reaction center</keyword>
<keyword id="KW-1185">Reference proteome</keyword>
<keyword id="KW-0793">Thylakoid</keyword>
<keyword id="KW-0812">Transmembrane</keyword>
<keyword id="KW-1133">Transmembrane helix</keyword>
<evidence type="ECO:0000255" key="1">
    <source>
        <dbReference type="HAMAP-Rule" id="MF_00441"/>
    </source>
</evidence>
<proteinExistence type="inferred from homology"/>
<geneLocation type="chloroplast"/>
<gene>
    <name evidence="1" type="primary">psbK</name>
</gene>
<organism>
    <name type="scientific">Glycine max</name>
    <name type="common">Soybean</name>
    <name type="synonym">Glycine hispida</name>
    <dbReference type="NCBI Taxonomy" id="3847"/>
    <lineage>
        <taxon>Eukaryota</taxon>
        <taxon>Viridiplantae</taxon>
        <taxon>Streptophyta</taxon>
        <taxon>Embryophyta</taxon>
        <taxon>Tracheophyta</taxon>
        <taxon>Spermatophyta</taxon>
        <taxon>Magnoliopsida</taxon>
        <taxon>eudicotyledons</taxon>
        <taxon>Gunneridae</taxon>
        <taxon>Pentapetalae</taxon>
        <taxon>rosids</taxon>
        <taxon>fabids</taxon>
        <taxon>Fabales</taxon>
        <taxon>Fabaceae</taxon>
        <taxon>Papilionoideae</taxon>
        <taxon>50 kb inversion clade</taxon>
        <taxon>NPAAA clade</taxon>
        <taxon>indigoferoid/millettioid clade</taxon>
        <taxon>Phaseoleae</taxon>
        <taxon>Glycine</taxon>
        <taxon>Glycine subgen. Soja</taxon>
    </lineage>
</organism>
<dbReference type="EMBL" id="DQ317523">
    <property type="protein sequence ID" value="ABC25132.1"/>
    <property type="molecule type" value="Genomic_DNA"/>
</dbReference>
<dbReference type="RefSeq" id="YP_538772.1">
    <property type="nucleotide sequence ID" value="NC_007942.1"/>
</dbReference>
<dbReference type="SMR" id="Q2PMS6"/>
<dbReference type="FunCoup" id="Q2PMS6">
    <property type="interactions" value="77"/>
</dbReference>
<dbReference type="STRING" id="3847.Q2PMS6"/>
<dbReference type="PaxDb" id="3847-GLYMA15G39780.2"/>
<dbReference type="GeneID" id="3989303"/>
<dbReference type="KEGG" id="gmx:3989303"/>
<dbReference type="eggNOG" id="ENOG502SDX2">
    <property type="taxonomic scope" value="Eukaryota"/>
</dbReference>
<dbReference type="InParanoid" id="Q2PMS6"/>
<dbReference type="Proteomes" id="UP000008827">
    <property type="component" value="Chloroplast"/>
</dbReference>
<dbReference type="GO" id="GO:0009535">
    <property type="term" value="C:chloroplast thylakoid membrane"/>
    <property type="evidence" value="ECO:0007669"/>
    <property type="project" value="UniProtKB-SubCell"/>
</dbReference>
<dbReference type="GO" id="GO:0009539">
    <property type="term" value="C:photosystem II reaction center"/>
    <property type="evidence" value="ECO:0007669"/>
    <property type="project" value="InterPro"/>
</dbReference>
<dbReference type="GO" id="GO:0015979">
    <property type="term" value="P:photosynthesis"/>
    <property type="evidence" value="ECO:0007669"/>
    <property type="project" value="UniProtKB-UniRule"/>
</dbReference>
<dbReference type="HAMAP" id="MF_00441">
    <property type="entry name" value="PSII_PsbK"/>
    <property type="match status" value="1"/>
</dbReference>
<dbReference type="InterPro" id="IPR003687">
    <property type="entry name" value="PSII_PsbK"/>
</dbReference>
<dbReference type="InterPro" id="IPR037270">
    <property type="entry name" value="PSII_PsbK_sf"/>
</dbReference>
<dbReference type="NCBIfam" id="NF002715">
    <property type="entry name" value="PRK02553.1"/>
    <property type="match status" value="1"/>
</dbReference>
<dbReference type="PANTHER" id="PTHR35325">
    <property type="match status" value="1"/>
</dbReference>
<dbReference type="PANTHER" id="PTHR35325:SF1">
    <property type="entry name" value="PHOTOSYSTEM II REACTION CENTER PROTEIN K"/>
    <property type="match status" value="1"/>
</dbReference>
<dbReference type="Pfam" id="PF02533">
    <property type="entry name" value="PsbK"/>
    <property type="match status" value="1"/>
</dbReference>
<dbReference type="SUPFAM" id="SSF161037">
    <property type="entry name" value="Photosystem II reaction center protein K, PsbK"/>
    <property type="match status" value="1"/>
</dbReference>
<comment type="function">
    <text evidence="1">One of the components of the core complex of photosystem II (PSII). PSII is a light-driven water:plastoquinone oxidoreductase that uses light energy to abstract electrons from H(2)O, generating O(2) and a proton gradient subsequently used for ATP formation. It consists of a core antenna complex that captures photons, and an electron transfer chain that converts photonic excitation into a charge separation.</text>
</comment>
<comment type="subunit">
    <text evidence="1">PSII is composed of 1 copy each of membrane proteins PsbA, PsbB, PsbC, PsbD, PsbE, PsbF, PsbH, PsbI, PsbJ, PsbK, PsbL, PsbM, PsbT, PsbX, PsbY, PsbZ, Psb30/Ycf12, at least 3 peripheral proteins of the oxygen-evolving complex and a large number of cofactors. It forms dimeric complexes.</text>
</comment>
<comment type="subcellular location">
    <subcellularLocation>
        <location evidence="1">Plastid</location>
        <location evidence="1">Chloroplast thylakoid membrane</location>
        <topology evidence="1">Single-pass membrane protein</topology>
    </subcellularLocation>
</comment>
<comment type="similarity">
    <text evidence="1">Belongs to the PsbK family.</text>
</comment>
<feature type="propeptide" id="PRO_0000276142" evidence="1">
    <location>
        <begin position="1"/>
        <end position="24"/>
    </location>
</feature>
<feature type="chain" id="PRO_0000276143" description="Photosystem II reaction center protein K" evidence="1">
    <location>
        <begin position="25"/>
        <end position="61"/>
    </location>
</feature>
<feature type="transmembrane region" description="Helical" evidence="1">
    <location>
        <begin position="36"/>
        <end position="56"/>
    </location>
</feature>
<reference key="1">
    <citation type="journal article" date="2005" name="Plant Mol. Biol.">
        <title>Complete chloroplast genome sequence of Glycine max and comparative analyses with other legume genomes.</title>
        <authorList>
            <person name="Saski C."/>
            <person name="Lee S.-B."/>
            <person name="Daniell H."/>
            <person name="Wood T.C."/>
            <person name="Tomkins J."/>
            <person name="Kim H.-G."/>
            <person name="Jansen R.K."/>
        </authorList>
    </citation>
    <scope>NUCLEOTIDE SEQUENCE [LARGE SCALE GENOMIC DNA]</scope>
    <source>
        <strain>cv. PI 437654</strain>
    </source>
</reference>
<accession>Q2PMS6</accession>
<name>PSBK_SOYBN</name>